<dbReference type="EMBL" id="AB086179">
    <property type="protein sequence ID" value="BAC55351.1"/>
    <property type="molecule type" value="Genomic_DNA"/>
</dbReference>
<dbReference type="EMBL" id="AB087443">
    <property type="protein sequence ID" value="BAC55444.1"/>
    <property type="molecule type" value="mRNA"/>
</dbReference>
<dbReference type="RefSeq" id="NP_777415.1">
    <property type="nucleotide sequence ID" value="NC_004543.1"/>
</dbReference>
<dbReference type="SMR" id="Q85AX4"/>
<dbReference type="GeneID" id="2553434"/>
<dbReference type="GO" id="GO:0009507">
    <property type="term" value="C:chloroplast"/>
    <property type="evidence" value="ECO:0007669"/>
    <property type="project" value="UniProtKB-SubCell"/>
</dbReference>
<dbReference type="GO" id="GO:0015935">
    <property type="term" value="C:small ribosomal subunit"/>
    <property type="evidence" value="ECO:0007669"/>
    <property type="project" value="InterPro"/>
</dbReference>
<dbReference type="GO" id="GO:0019843">
    <property type="term" value="F:rRNA binding"/>
    <property type="evidence" value="ECO:0007669"/>
    <property type="project" value="UniProtKB-UniRule"/>
</dbReference>
<dbReference type="GO" id="GO:0003735">
    <property type="term" value="F:structural constituent of ribosome"/>
    <property type="evidence" value="ECO:0007669"/>
    <property type="project" value="InterPro"/>
</dbReference>
<dbReference type="GO" id="GO:0042274">
    <property type="term" value="P:ribosomal small subunit biogenesis"/>
    <property type="evidence" value="ECO:0007669"/>
    <property type="project" value="TreeGrafter"/>
</dbReference>
<dbReference type="GO" id="GO:0006412">
    <property type="term" value="P:translation"/>
    <property type="evidence" value="ECO:0007669"/>
    <property type="project" value="UniProtKB-UniRule"/>
</dbReference>
<dbReference type="CDD" id="cd00165">
    <property type="entry name" value="S4"/>
    <property type="match status" value="1"/>
</dbReference>
<dbReference type="FunFam" id="1.10.1050.10:FF:000002">
    <property type="entry name" value="30S ribosomal protein S4, chloroplastic"/>
    <property type="match status" value="1"/>
</dbReference>
<dbReference type="FunFam" id="3.10.290.10:FF:000081">
    <property type="entry name" value="30S ribosomal protein S4, chloroplastic"/>
    <property type="match status" value="1"/>
</dbReference>
<dbReference type="Gene3D" id="1.10.1050.10">
    <property type="entry name" value="Ribosomal Protein S4 Delta 41, Chain A, domain 1"/>
    <property type="match status" value="1"/>
</dbReference>
<dbReference type="Gene3D" id="3.10.290.10">
    <property type="entry name" value="RNA-binding S4 domain"/>
    <property type="match status" value="1"/>
</dbReference>
<dbReference type="HAMAP" id="MF_01306_B">
    <property type="entry name" value="Ribosomal_uS4_B"/>
    <property type="match status" value="1"/>
</dbReference>
<dbReference type="InterPro" id="IPR022801">
    <property type="entry name" value="Ribosomal_uS4"/>
</dbReference>
<dbReference type="InterPro" id="IPR005709">
    <property type="entry name" value="Ribosomal_uS4_bac-type"/>
</dbReference>
<dbReference type="InterPro" id="IPR018079">
    <property type="entry name" value="Ribosomal_uS4_CS"/>
</dbReference>
<dbReference type="InterPro" id="IPR001912">
    <property type="entry name" value="Ribosomal_uS4_N"/>
</dbReference>
<dbReference type="InterPro" id="IPR002942">
    <property type="entry name" value="S4_RNA-bd"/>
</dbReference>
<dbReference type="InterPro" id="IPR036986">
    <property type="entry name" value="S4_RNA-bd_sf"/>
</dbReference>
<dbReference type="NCBIfam" id="NF003717">
    <property type="entry name" value="PRK05327.1"/>
    <property type="match status" value="1"/>
</dbReference>
<dbReference type="NCBIfam" id="TIGR01017">
    <property type="entry name" value="rpsD_bact"/>
    <property type="match status" value="1"/>
</dbReference>
<dbReference type="PANTHER" id="PTHR11831">
    <property type="entry name" value="30S 40S RIBOSOMAL PROTEIN"/>
    <property type="match status" value="1"/>
</dbReference>
<dbReference type="PANTHER" id="PTHR11831:SF4">
    <property type="entry name" value="SMALL RIBOSOMAL SUBUNIT PROTEIN US4M"/>
    <property type="match status" value="1"/>
</dbReference>
<dbReference type="Pfam" id="PF00163">
    <property type="entry name" value="Ribosomal_S4"/>
    <property type="match status" value="1"/>
</dbReference>
<dbReference type="Pfam" id="PF01479">
    <property type="entry name" value="S4"/>
    <property type="match status" value="1"/>
</dbReference>
<dbReference type="SMART" id="SM01390">
    <property type="entry name" value="Ribosomal_S4"/>
    <property type="match status" value="1"/>
</dbReference>
<dbReference type="SMART" id="SM00363">
    <property type="entry name" value="S4"/>
    <property type="match status" value="1"/>
</dbReference>
<dbReference type="SUPFAM" id="SSF55174">
    <property type="entry name" value="Alpha-L RNA-binding motif"/>
    <property type="match status" value="1"/>
</dbReference>
<dbReference type="PROSITE" id="PS00632">
    <property type="entry name" value="RIBOSOMAL_S4"/>
    <property type="match status" value="1"/>
</dbReference>
<dbReference type="PROSITE" id="PS50889">
    <property type="entry name" value="S4"/>
    <property type="match status" value="1"/>
</dbReference>
<protein>
    <recommendedName>
        <fullName evidence="4">Small ribosomal subunit protein uS4c</fullName>
    </recommendedName>
    <alternativeName>
        <fullName>30S ribosomal protein S4, chloroplastic</fullName>
    </alternativeName>
</protein>
<organism>
    <name type="scientific">Anthoceros angustus</name>
    <name type="common">Hornwort</name>
    <name type="synonym">Anthoceros formosae</name>
    <dbReference type="NCBI Taxonomy" id="48387"/>
    <lineage>
        <taxon>Eukaryota</taxon>
        <taxon>Viridiplantae</taxon>
        <taxon>Streptophyta</taxon>
        <taxon>Embryophyta</taxon>
        <taxon>Anthocerotophyta</taxon>
        <taxon>Anthocerotopsida</taxon>
        <taxon>Anthocerotidae</taxon>
        <taxon>Anthocerotales</taxon>
        <taxon>Anthocerotaceae</taxon>
        <taxon>Anthoceros</taxon>
    </lineage>
</organism>
<accession>Q85AX4</accession>
<comment type="function">
    <text evidence="1">One of the primary rRNA binding proteins, it binds directly to 16S rRNA where it nucleates assembly of the body of the 30S subunit.</text>
</comment>
<comment type="function">
    <text evidence="1">With S5 and S12 plays an important role in translational accuracy.</text>
</comment>
<comment type="subunit">
    <text evidence="1">Part of the 30S ribosomal subunit. Contacts protein S5. The interaction surface between S4 and S5 is involved in control of translational fidelity (By similarity).</text>
</comment>
<comment type="subcellular location">
    <subcellularLocation>
        <location>Plastid</location>
        <location>Chloroplast</location>
    </subcellularLocation>
</comment>
<comment type="RNA editing">
    <location>
        <position position="64" evidence="2 3"/>
    </location>
    <location>
        <position position="79" evidence="2 3"/>
    </location>
    <location>
        <position position="91" evidence="2 3"/>
    </location>
    <location>
        <position position="97" evidence="2 3"/>
    </location>
    <location>
        <position position="98" evidence="2 3"/>
    </location>
    <location>
        <position position="127" evidence="2 3"/>
    </location>
    <location>
        <position position="137" evidence="2 3"/>
    </location>
    <location>
        <position position="142" evidence="2 3"/>
    </location>
    <text>The nonsense codons at positions 64, 97 and 142 are modified to sense codons.</text>
</comment>
<comment type="similarity">
    <text evidence="4">Belongs to the universal ribosomal protein uS4 family.</text>
</comment>
<reference key="1">
    <citation type="journal article" date="2003" name="Nucleic Acids Res.">
        <title>The complete nucleotide sequence of the hornwort (Anthoceros formosae) chloroplast genome: insight into the earliest land plants.</title>
        <authorList>
            <person name="Kugita M."/>
            <person name="Kaneko A."/>
            <person name="Yamamoto Y."/>
            <person name="Takeya Y."/>
            <person name="Matsumoto T."/>
            <person name="Yoshinaga K."/>
        </authorList>
    </citation>
    <scope>NUCLEOTIDE SEQUENCE [LARGE SCALE GENOMIC DNA]</scope>
    <scope>RNA EDITING</scope>
</reference>
<reference key="2">
    <citation type="journal article" date="2003" name="Nucleic Acids Res.">
        <title>RNA editing in hornwort chloroplasts makes more than half the genes functional.</title>
        <authorList>
            <person name="Kugita M."/>
            <person name="Yamamoto Y."/>
            <person name="Fujikawa T."/>
            <person name="Matsumoto T."/>
            <person name="Yoshinaga K."/>
        </authorList>
    </citation>
    <scope>NUCLEOTIDE SEQUENCE [MRNA]</scope>
    <scope>RNA EDITING</scope>
    <source>
        <tissue>Thallus</tissue>
    </source>
</reference>
<feature type="chain" id="PRO_0000132532" description="Small ribosomal subunit protein uS4c">
    <location>
        <begin position="1"/>
        <end position="202"/>
    </location>
</feature>
<feature type="domain" description="S4 RNA-binding">
    <location>
        <begin position="90"/>
        <end position="158"/>
    </location>
</feature>
<gene>
    <name type="primary">rps4</name>
</gene>
<sequence length="202" mass="23577">MSRYRGPRVRIIRRLGTLPGLTSKTPESKPSYINQSTSSRKISQYRIRLEEKQKLRFHYGITERQLLKYVRIARKAKGSTGQVLLQLLEMRLDNIIFRLGLAPTIPGARQLVNHRHVLVNDCTVDIPSFRCKPQDVITIRDRQKSQNLMKRSRDSYEKYGIPNHLTFNSVQNIGLVNETIDRDWIGLKINELLVVEYYSRQA</sequence>
<name>RR4_ANTAG</name>
<proteinExistence type="evidence at transcript level"/>
<evidence type="ECO:0000250" key="1"/>
<evidence type="ECO:0000269" key="2">
    <source>
    </source>
</evidence>
<evidence type="ECO:0000269" key="3">
    <source>
    </source>
</evidence>
<evidence type="ECO:0000305" key="4"/>
<geneLocation type="chloroplast"/>
<keyword id="KW-0150">Chloroplast</keyword>
<keyword id="KW-0934">Plastid</keyword>
<keyword id="KW-0687">Ribonucleoprotein</keyword>
<keyword id="KW-0689">Ribosomal protein</keyword>
<keyword id="KW-0691">RNA editing</keyword>
<keyword id="KW-0694">RNA-binding</keyword>
<keyword id="KW-0699">rRNA-binding</keyword>